<dbReference type="EMBL" id="CP000744">
    <property type="protein sequence ID" value="ABR81262.1"/>
    <property type="molecule type" value="Genomic_DNA"/>
</dbReference>
<dbReference type="RefSeq" id="WP_012077496.1">
    <property type="nucleotide sequence ID" value="NC_009656.1"/>
</dbReference>
<dbReference type="SMR" id="A6VCL9"/>
<dbReference type="GeneID" id="77223299"/>
<dbReference type="KEGG" id="pap:PSPA7_5482"/>
<dbReference type="HOGENOM" id="CLU_057217_6_0_6"/>
<dbReference type="Proteomes" id="UP000001582">
    <property type="component" value="Chromosome"/>
</dbReference>
<dbReference type="GO" id="GO:0005829">
    <property type="term" value="C:cytosol"/>
    <property type="evidence" value="ECO:0007669"/>
    <property type="project" value="TreeGrafter"/>
</dbReference>
<dbReference type="GO" id="GO:0000774">
    <property type="term" value="F:adenyl-nucleotide exchange factor activity"/>
    <property type="evidence" value="ECO:0007669"/>
    <property type="project" value="InterPro"/>
</dbReference>
<dbReference type="GO" id="GO:0042803">
    <property type="term" value="F:protein homodimerization activity"/>
    <property type="evidence" value="ECO:0007669"/>
    <property type="project" value="InterPro"/>
</dbReference>
<dbReference type="GO" id="GO:0051087">
    <property type="term" value="F:protein-folding chaperone binding"/>
    <property type="evidence" value="ECO:0007669"/>
    <property type="project" value="InterPro"/>
</dbReference>
<dbReference type="GO" id="GO:0051082">
    <property type="term" value="F:unfolded protein binding"/>
    <property type="evidence" value="ECO:0007669"/>
    <property type="project" value="TreeGrafter"/>
</dbReference>
<dbReference type="GO" id="GO:0006457">
    <property type="term" value="P:protein folding"/>
    <property type="evidence" value="ECO:0007669"/>
    <property type="project" value="InterPro"/>
</dbReference>
<dbReference type="CDD" id="cd00446">
    <property type="entry name" value="GrpE"/>
    <property type="match status" value="1"/>
</dbReference>
<dbReference type="FunFam" id="2.30.22.10:FF:000001">
    <property type="entry name" value="Protein GrpE"/>
    <property type="match status" value="1"/>
</dbReference>
<dbReference type="FunFam" id="3.90.20.20:FF:000014">
    <property type="entry name" value="Protein GrpE"/>
    <property type="match status" value="1"/>
</dbReference>
<dbReference type="Gene3D" id="3.90.20.20">
    <property type="match status" value="1"/>
</dbReference>
<dbReference type="Gene3D" id="2.30.22.10">
    <property type="entry name" value="Head domain of nucleotide exchange factor GrpE"/>
    <property type="match status" value="1"/>
</dbReference>
<dbReference type="HAMAP" id="MF_01151">
    <property type="entry name" value="GrpE"/>
    <property type="match status" value="1"/>
</dbReference>
<dbReference type="InterPro" id="IPR000740">
    <property type="entry name" value="GrpE"/>
</dbReference>
<dbReference type="InterPro" id="IPR013805">
    <property type="entry name" value="GrpE_coiled_coil"/>
</dbReference>
<dbReference type="InterPro" id="IPR009012">
    <property type="entry name" value="GrpE_head"/>
</dbReference>
<dbReference type="NCBIfam" id="NF010737">
    <property type="entry name" value="PRK14139.1"/>
    <property type="match status" value="1"/>
</dbReference>
<dbReference type="NCBIfam" id="NF010738">
    <property type="entry name" value="PRK14140.1"/>
    <property type="match status" value="1"/>
</dbReference>
<dbReference type="NCBIfam" id="NF010748">
    <property type="entry name" value="PRK14150.1"/>
    <property type="match status" value="1"/>
</dbReference>
<dbReference type="NCBIfam" id="NF010749">
    <property type="entry name" value="PRK14151.1"/>
    <property type="match status" value="1"/>
</dbReference>
<dbReference type="PANTHER" id="PTHR21237">
    <property type="entry name" value="GRPE PROTEIN"/>
    <property type="match status" value="1"/>
</dbReference>
<dbReference type="PANTHER" id="PTHR21237:SF23">
    <property type="entry name" value="GRPE PROTEIN HOMOLOG, MITOCHONDRIAL"/>
    <property type="match status" value="1"/>
</dbReference>
<dbReference type="Pfam" id="PF01025">
    <property type="entry name" value="GrpE"/>
    <property type="match status" value="1"/>
</dbReference>
<dbReference type="PRINTS" id="PR00773">
    <property type="entry name" value="GRPEPROTEIN"/>
</dbReference>
<dbReference type="SUPFAM" id="SSF58014">
    <property type="entry name" value="Coiled-coil domain of nucleotide exchange factor GrpE"/>
    <property type="match status" value="1"/>
</dbReference>
<dbReference type="SUPFAM" id="SSF51064">
    <property type="entry name" value="Head domain of nucleotide exchange factor GrpE"/>
    <property type="match status" value="1"/>
</dbReference>
<dbReference type="PROSITE" id="PS01071">
    <property type="entry name" value="GRPE"/>
    <property type="match status" value="1"/>
</dbReference>
<organism>
    <name type="scientific">Pseudomonas paraeruginosa (strain DSM 24068 / PA7)</name>
    <name type="common">Pseudomonas aeruginosa (strain PA7)</name>
    <dbReference type="NCBI Taxonomy" id="381754"/>
    <lineage>
        <taxon>Bacteria</taxon>
        <taxon>Pseudomonadati</taxon>
        <taxon>Pseudomonadota</taxon>
        <taxon>Gammaproteobacteria</taxon>
        <taxon>Pseudomonadales</taxon>
        <taxon>Pseudomonadaceae</taxon>
        <taxon>Pseudomonas</taxon>
        <taxon>Pseudomonas paraeruginosa</taxon>
    </lineage>
</organism>
<evidence type="ECO:0000255" key="1">
    <source>
        <dbReference type="HAMAP-Rule" id="MF_01151"/>
    </source>
</evidence>
<evidence type="ECO:0000256" key="2">
    <source>
        <dbReference type="SAM" id="MobiDB-lite"/>
    </source>
</evidence>
<proteinExistence type="inferred from homology"/>
<protein>
    <recommendedName>
        <fullName evidence="1">Protein GrpE</fullName>
    </recommendedName>
    <alternativeName>
        <fullName evidence="1">HSP-70 cofactor</fullName>
    </alternativeName>
</protein>
<reference key="1">
    <citation type="submission" date="2007-06" db="EMBL/GenBank/DDBJ databases">
        <authorList>
            <person name="Dodson R.J."/>
            <person name="Harkins D."/>
            <person name="Paulsen I.T."/>
        </authorList>
    </citation>
    <scope>NUCLEOTIDE SEQUENCE [LARGE SCALE GENOMIC DNA]</scope>
    <source>
        <strain>DSM 24068 / PA7</strain>
    </source>
</reference>
<keyword id="KW-0143">Chaperone</keyword>
<keyword id="KW-0963">Cytoplasm</keyword>
<keyword id="KW-0346">Stress response</keyword>
<accession>A6VCL9</accession>
<gene>
    <name evidence="1" type="primary">grpE</name>
    <name type="ordered locus">PSPA7_5482</name>
</gene>
<sequence>MADEQQQTLDPQAPEQTDAPEAAKDLTARVQELEEQLAAAQDQSLRLVADLQNVRRRAEQDVEKAHKFALEKFAGDLLAVVDTLERGLQMSNPDDEAIRPMREGMELTLKMFDDTLRRYQVEAINPEGEPFNPEQHQAMVMEESATAEPGSVLKVFQKGYLISGRLLRPAMVVVSKAPSETPPSIDEQA</sequence>
<comment type="function">
    <text evidence="1">Participates actively in the response to hyperosmotic and heat shock by preventing the aggregation of stress-denatured proteins, in association with DnaK and GrpE. It is the nucleotide exchange factor for DnaK and may function as a thermosensor. Unfolded proteins bind initially to DnaJ; upon interaction with the DnaJ-bound protein, DnaK hydrolyzes its bound ATP, resulting in the formation of a stable complex. GrpE releases ADP from DnaK; ATP binding to DnaK triggers the release of the substrate protein, thus completing the reaction cycle. Several rounds of ATP-dependent interactions between DnaJ, DnaK and GrpE are required for fully efficient folding.</text>
</comment>
<comment type="subunit">
    <text evidence="1">Homodimer.</text>
</comment>
<comment type="subcellular location">
    <subcellularLocation>
        <location evidence="1">Cytoplasm</location>
    </subcellularLocation>
</comment>
<comment type="similarity">
    <text evidence="1">Belongs to the GrpE family.</text>
</comment>
<name>GRPE_PSEP7</name>
<feature type="chain" id="PRO_1000164211" description="Protein GrpE">
    <location>
        <begin position="1"/>
        <end position="189"/>
    </location>
</feature>
<feature type="region of interest" description="Disordered" evidence="2">
    <location>
        <begin position="1"/>
        <end position="21"/>
    </location>
</feature>
<feature type="compositionally biased region" description="Polar residues" evidence="2">
    <location>
        <begin position="1"/>
        <end position="10"/>
    </location>
</feature>